<name>ARAJ_ECOLI</name>
<sequence length="394" mass="41926">MKKVILSLALGTFGLGMAEFGIMGVLTELAHNVGISIPAAGHMISYYALGVVVGAPIIALFSSRYSLKHILLFLVALCVIGNAMFTLSSSYLMLAIGRLVSGFPHGAFFGVGAIVLSKIIKPGKVTAAVAGMVSGMTVANLLGIPLGTYLSQEFSWRYTFLLIAVFNIAVMASVYFWVPDIRDEAKGNLREQFHFLRSPAPWLIFAATMFGNAGVFAWFSYVKPYMMFISGFSETAMTFIMMLVGLGMVLGNMLSGRISGRYSPLRIAAVTDFIIVLALLMLFFCGGMKTTSLIFAFICCAGLFALSAPLQILLLQNAKGGELLGAAGGQIAFNLGSAVGAYCGGMMLTLGLAYNYVALPAALLSFAAMSSLLLYGRYKRQQAADTPVLAKPLG</sequence>
<reference key="1">
    <citation type="journal article" date="1991" name="J. Bacteriol.">
        <title>Mapping, sequence, and apparent lack of function of araJ, a gene of the Escherichia coli arabinose regulon.</title>
        <authorList>
            <person name="Reeder T.C."/>
            <person name="Schleif R.F."/>
        </authorList>
    </citation>
    <scope>NUCLEOTIDE SEQUENCE [GENOMIC DNA]</scope>
    <scope>DISRUPTION PHENOTYPE</scope>
</reference>
<reference key="2">
    <citation type="submission" date="1997-01" db="EMBL/GenBank/DDBJ databases">
        <title>Sequence of minutes 4-25 of Escherichia coli.</title>
        <authorList>
            <person name="Chung E."/>
            <person name="Allen E."/>
            <person name="Araujo R."/>
            <person name="Aparicio A.M."/>
            <person name="Davis K."/>
            <person name="Duncan M."/>
            <person name="Federspiel N."/>
            <person name="Hyman R."/>
            <person name="Kalman S."/>
            <person name="Komp C."/>
            <person name="Kurdi O."/>
            <person name="Lew H."/>
            <person name="Lin D."/>
            <person name="Namath A."/>
            <person name="Oefner P."/>
            <person name="Roberts D."/>
            <person name="Schramm S."/>
            <person name="Davis R.W."/>
        </authorList>
    </citation>
    <scope>NUCLEOTIDE SEQUENCE [LARGE SCALE GENOMIC DNA]</scope>
    <source>
        <strain>K12 / MG1655 / ATCC 47076</strain>
    </source>
</reference>
<reference key="3">
    <citation type="journal article" date="1997" name="Science">
        <title>The complete genome sequence of Escherichia coli K-12.</title>
        <authorList>
            <person name="Blattner F.R."/>
            <person name="Plunkett G. III"/>
            <person name="Bloch C.A."/>
            <person name="Perna N.T."/>
            <person name="Burland V."/>
            <person name="Riley M."/>
            <person name="Collado-Vides J."/>
            <person name="Glasner J.D."/>
            <person name="Rode C.K."/>
            <person name="Mayhew G.F."/>
            <person name="Gregor J."/>
            <person name="Davis N.W."/>
            <person name="Kirkpatrick H.A."/>
            <person name="Goeden M.A."/>
            <person name="Rose D.J."/>
            <person name="Mau B."/>
            <person name="Shao Y."/>
        </authorList>
    </citation>
    <scope>NUCLEOTIDE SEQUENCE [LARGE SCALE GENOMIC DNA]</scope>
    <source>
        <strain>K12 / MG1655 / ATCC 47076</strain>
    </source>
</reference>
<reference key="4">
    <citation type="journal article" date="2006" name="Mol. Syst. Biol.">
        <title>Highly accurate genome sequences of Escherichia coli K-12 strains MG1655 and W3110.</title>
        <authorList>
            <person name="Hayashi K."/>
            <person name="Morooka N."/>
            <person name="Yamamoto Y."/>
            <person name="Fujita K."/>
            <person name="Isono K."/>
            <person name="Choi S."/>
            <person name="Ohtsubo E."/>
            <person name="Baba T."/>
            <person name="Wanner B.L."/>
            <person name="Mori H."/>
            <person name="Horiuchi T."/>
        </authorList>
    </citation>
    <scope>NUCLEOTIDE SEQUENCE [LARGE SCALE GENOMIC DNA]</scope>
    <source>
        <strain>K12 / W3110 / ATCC 27325 / DSM 5911</strain>
    </source>
</reference>
<reference key="5">
    <citation type="journal article" date="1990" name="J. Mol. Biol.">
        <title>Characterization of the Escherichia coli araFGH and araJ promoters.</title>
        <authorList>
            <person name="Hendrickson W."/>
            <person name="Stoner C."/>
            <person name="Schleif R."/>
        </authorList>
    </citation>
    <scope>INDUCTION</scope>
</reference>
<reference key="6">
    <citation type="journal article" date="2005" name="Science">
        <title>Global topology analysis of the Escherichia coli inner membrane proteome.</title>
        <authorList>
            <person name="Daley D.O."/>
            <person name="Rapp M."/>
            <person name="Granseth E."/>
            <person name="Melen K."/>
            <person name="Drew D."/>
            <person name="von Heijne G."/>
        </authorList>
    </citation>
    <scope>SUBCELLULAR LOCATION</scope>
    <scope>TOPOLOGY [LARGE SCALE ANALYSIS]</scope>
    <source>
        <strain>K12 / MG1655 / ATCC 47076</strain>
    </source>
</reference>
<comment type="function">
    <text evidence="7">May be involved in either the transport or processing of arabinose polymers.</text>
</comment>
<comment type="subcellular location">
    <subcellularLocation>
        <location evidence="2">Cell inner membrane</location>
        <topology evidence="6">Multi-pass membrane protein</topology>
    </subcellularLocation>
</comment>
<comment type="induction">
    <text evidence="4 7">Induced by arabinose (Probable) (PubMed:2231717). Transcription is dependent on the transcription factor AraC, the cAMP receptor protein (CRP) and cAMP (PubMed:2231717).</text>
</comment>
<comment type="disruption phenotype">
    <text evidence="3">No visible effect on arabinose uptake or growth on arabinose.</text>
</comment>
<comment type="similarity">
    <text evidence="5">Belongs to the major facilitator superfamily.</text>
</comment>
<comment type="sequence caution" evidence="5">
    <conflict type="erroneous initiation">
        <sequence resource="EMBL-CDS" id="AAB18120"/>
    </conflict>
    <text>Extended N-terminus.</text>
</comment>
<organism>
    <name type="scientific">Escherichia coli (strain K12)</name>
    <dbReference type="NCBI Taxonomy" id="83333"/>
    <lineage>
        <taxon>Bacteria</taxon>
        <taxon>Pseudomonadati</taxon>
        <taxon>Pseudomonadota</taxon>
        <taxon>Gammaproteobacteria</taxon>
        <taxon>Enterobacterales</taxon>
        <taxon>Enterobacteriaceae</taxon>
        <taxon>Escherichia</taxon>
    </lineage>
</organism>
<evidence type="ECO:0000255" key="1"/>
<evidence type="ECO:0000269" key="2">
    <source>
    </source>
</evidence>
<evidence type="ECO:0000269" key="3">
    <source>
    </source>
</evidence>
<evidence type="ECO:0000269" key="4">
    <source>
    </source>
</evidence>
<evidence type="ECO:0000305" key="5"/>
<evidence type="ECO:0000305" key="6">
    <source>
    </source>
</evidence>
<evidence type="ECO:0000305" key="7">
    <source>
    </source>
</evidence>
<gene>
    <name type="primary">araJ</name>
    <name type="ordered locus">b0396</name>
    <name type="ordered locus">JW0386</name>
</gene>
<accession>P23910</accession>
<accession>Q2MC30</accession>
<dbReference type="EMBL" id="M64787">
    <property type="protein sequence ID" value="AAA23474.1"/>
    <property type="molecule type" value="Genomic_DNA"/>
</dbReference>
<dbReference type="EMBL" id="U73857">
    <property type="protein sequence ID" value="AAB18120.1"/>
    <property type="status" value="ALT_INIT"/>
    <property type="molecule type" value="Genomic_DNA"/>
</dbReference>
<dbReference type="EMBL" id="U00096">
    <property type="protein sequence ID" value="AAC73499.1"/>
    <property type="molecule type" value="Genomic_DNA"/>
</dbReference>
<dbReference type="EMBL" id="AP009048">
    <property type="protein sequence ID" value="BAE76176.1"/>
    <property type="molecule type" value="Genomic_DNA"/>
</dbReference>
<dbReference type="PIR" id="B43750">
    <property type="entry name" value="B43750"/>
</dbReference>
<dbReference type="RefSeq" id="NP_414930.3">
    <property type="nucleotide sequence ID" value="NC_000913.3"/>
</dbReference>
<dbReference type="RefSeq" id="WP_001326926.1">
    <property type="nucleotide sequence ID" value="NZ_SSZK01000009.1"/>
</dbReference>
<dbReference type="SMR" id="P23910"/>
<dbReference type="BioGRID" id="4263172">
    <property type="interactions" value="19"/>
</dbReference>
<dbReference type="FunCoup" id="P23910">
    <property type="interactions" value="106"/>
</dbReference>
<dbReference type="STRING" id="511145.b0396"/>
<dbReference type="TCDB" id="2.A.1.2.14">
    <property type="family name" value="the major facilitator superfamily (mfs)"/>
</dbReference>
<dbReference type="PaxDb" id="511145-b0396"/>
<dbReference type="EnsemblBacteria" id="AAC73499">
    <property type="protein sequence ID" value="AAC73499"/>
    <property type="gene ID" value="b0396"/>
</dbReference>
<dbReference type="GeneID" id="949077"/>
<dbReference type="KEGG" id="ecj:JW0386"/>
<dbReference type="KEGG" id="eco:b0396"/>
<dbReference type="KEGG" id="ecoc:C3026_01925"/>
<dbReference type="PATRIC" id="fig|511145.12.peg.409"/>
<dbReference type="EchoBASE" id="EB0058"/>
<dbReference type="eggNOG" id="COG2814">
    <property type="taxonomic scope" value="Bacteria"/>
</dbReference>
<dbReference type="HOGENOM" id="CLU_001265_61_2_6"/>
<dbReference type="InParanoid" id="P23910"/>
<dbReference type="OMA" id="MCISNSL"/>
<dbReference type="OrthoDB" id="9788453at2"/>
<dbReference type="PhylomeDB" id="P23910"/>
<dbReference type="BioCyc" id="EcoCyc:ARAJ-MONOMER"/>
<dbReference type="PRO" id="PR:P23910"/>
<dbReference type="Proteomes" id="UP000000625">
    <property type="component" value="Chromosome"/>
</dbReference>
<dbReference type="GO" id="GO:0005886">
    <property type="term" value="C:plasma membrane"/>
    <property type="evidence" value="ECO:0000314"/>
    <property type="project" value="EcoCyc"/>
</dbReference>
<dbReference type="GO" id="GO:0022857">
    <property type="term" value="F:transmembrane transporter activity"/>
    <property type="evidence" value="ECO:0000318"/>
    <property type="project" value="GO_Central"/>
</dbReference>
<dbReference type="GO" id="GO:0055085">
    <property type="term" value="P:transmembrane transport"/>
    <property type="evidence" value="ECO:0000318"/>
    <property type="project" value="GO_Central"/>
</dbReference>
<dbReference type="CDD" id="cd17324">
    <property type="entry name" value="MFS_NepI_like"/>
    <property type="match status" value="1"/>
</dbReference>
<dbReference type="FunFam" id="1.20.1250.20:FF:000332">
    <property type="entry name" value="Putative transporter AraJ"/>
    <property type="match status" value="1"/>
</dbReference>
<dbReference type="Gene3D" id="1.20.1250.20">
    <property type="entry name" value="MFS general substrate transporter like domains"/>
    <property type="match status" value="1"/>
</dbReference>
<dbReference type="InterPro" id="IPR011701">
    <property type="entry name" value="MFS"/>
</dbReference>
<dbReference type="InterPro" id="IPR020846">
    <property type="entry name" value="MFS_dom"/>
</dbReference>
<dbReference type="InterPro" id="IPR050189">
    <property type="entry name" value="MFS_Efflux_Transporters"/>
</dbReference>
<dbReference type="InterPro" id="IPR036259">
    <property type="entry name" value="MFS_trans_sf"/>
</dbReference>
<dbReference type="NCBIfam" id="NF007498">
    <property type="entry name" value="PRK10091.1"/>
    <property type="match status" value="1"/>
</dbReference>
<dbReference type="PANTHER" id="PTHR43124">
    <property type="entry name" value="PURINE EFFLUX PUMP PBUE"/>
    <property type="match status" value="1"/>
</dbReference>
<dbReference type="PANTHER" id="PTHR43124:SF6">
    <property type="entry name" value="TRANSPORTER ARAJ-RELATED"/>
    <property type="match status" value="1"/>
</dbReference>
<dbReference type="Pfam" id="PF07690">
    <property type="entry name" value="MFS_1"/>
    <property type="match status" value="1"/>
</dbReference>
<dbReference type="SUPFAM" id="SSF103473">
    <property type="entry name" value="MFS general substrate transporter"/>
    <property type="match status" value="1"/>
</dbReference>
<dbReference type="PROSITE" id="PS50850">
    <property type="entry name" value="MFS"/>
    <property type="match status" value="1"/>
</dbReference>
<keyword id="KW-0997">Cell inner membrane</keyword>
<keyword id="KW-1003">Cell membrane</keyword>
<keyword id="KW-0472">Membrane</keyword>
<keyword id="KW-1185">Reference proteome</keyword>
<keyword id="KW-0812">Transmembrane</keyword>
<keyword id="KW-1133">Transmembrane helix</keyword>
<keyword id="KW-0813">Transport</keyword>
<protein>
    <recommendedName>
        <fullName>Putative transporter AraJ</fullName>
    </recommendedName>
</protein>
<feature type="chain" id="PRO_0000084832" description="Putative transporter AraJ">
    <location>
        <begin position="1"/>
        <end position="394"/>
    </location>
</feature>
<feature type="topological domain" description="Cytoplasmic" evidence="1">
    <location>
        <begin position="1"/>
        <end position="4"/>
    </location>
</feature>
<feature type="transmembrane region" description="Helical" evidence="1">
    <location>
        <begin position="5"/>
        <end position="27"/>
    </location>
</feature>
<feature type="topological domain" description="Periplasmic" evidence="1">
    <location>
        <begin position="28"/>
        <end position="41"/>
    </location>
</feature>
<feature type="transmembrane region" description="Helical" evidence="1">
    <location>
        <begin position="42"/>
        <end position="63"/>
    </location>
</feature>
<feature type="topological domain" description="Cytoplasmic" evidence="1">
    <location>
        <begin position="64"/>
        <end position="69"/>
    </location>
</feature>
<feature type="transmembrane region" description="Helical" evidence="1">
    <location>
        <begin position="70"/>
        <end position="89"/>
    </location>
</feature>
<feature type="topological domain" description="Periplasmic" evidence="1">
    <location>
        <begin position="90"/>
        <end position="93"/>
    </location>
</feature>
<feature type="transmembrane region" description="Helical" evidence="1">
    <location>
        <begin position="94"/>
        <end position="116"/>
    </location>
</feature>
<feature type="topological domain" description="Cytoplasmic" evidence="1">
    <location>
        <begin position="117"/>
        <end position="128"/>
    </location>
</feature>
<feature type="transmembrane region" description="Helical" evidence="1">
    <location>
        <begin position="129"/>
        <end position="151"/>
    </location>
</feature>
<feature type="topological domain" description="Periplasmic" evidence="1">
    <location>
        <begin position="152"/>
        <end position="155"/>
    </location>
</feature>
<feature type="transmembrane region" description="Helical" evidence="1">
    <location>
        <begin position="156"/>
        <end position="178"/>
    </location>
</feature>
<feature type="topological domain" description="Cytoplasmic" evidence="1">
    <location>
        <begin position="179"/>
        <end position="198"/>
    </location>
</feature>
<feature type="transmembrane region" description="Helical" evidence="1">
    <location>
        <begin position="199"/>
        <end position="221"/>
    </location>
</feature>
<feature type="topological domain" description="Periplasmic" evidence="1">
    <location>
        <begin position="222"/>
        <end position="235"/>
    </location>
</feature>
<feature type="transmembrane region" description="Helical" evidence="1">
    <location>
        <begin position="236"/>
        <end position="255"/>
    </location>
</feature>
<feature type="topological domain" description="Cytoplasmic" evidence="1">
    <location>
        <begin position="256"/>
        <end position="261"/>
    </location>
</feature>
<feature type="transmembrane region" description="Helical" evidence="1">
    <location>
        <begin position="262"/>
        <end position="284"/>
    </location>
</feature>
<feature type="topological domain" description="Periplasmic" evidence="1">
    <location>
        <begin position="285"/>
        <end position="293"/>
    </location>
</feature>
<feature type="transmembrane region" description="Helical" evidence="1">
    <location>
        <begin position="294"/>
        <end position="316"/>
    </location>
</feature>
<feature type="topological domain" description="Cytoplasmic" evidence="1">
    <location>
        <begin position="317"/>
        <end position="322"/>
    </location>
</feature>
<feature type="transmembrane region" description="Helical" evidence="1">
    <location>
        <begin position="323"/>
        <end position="342"/>
    </location>
</feature>
<feature type="topological domain" description="Periplasmic" evidence="1">
    <location>
        <begin position="343"/>
        <end position="351"/>
    </location>
</feature>
<feature type="transmembrane region" description="Helical" evidence="1">
    <location>
        <begin position="352"/>
        <end position="374"/>
    </location>
</feature>
<feature type="topological domain" description="Cytoplasmic" evidence="1 2">
    <location>
        <begin position="375"/>
        <end position="394"/>
    </location>
</feature>
<proteinExistence type="evidence at protein level"/>